<reference key="1">
    <citation type="journal article" date="2010" name="Genome Biol.">
        <title>Structure and dynamics of the pan-genome of Streptococcus pneumoniae and closely related species.</title>
        <authorList>
            <person name="Donati C."/>
            <person name="Hiller N.L."/>
            <person name="Tettelin H."/>
            <person name="Muzzi A."/>
            <person name="Croucher N.J."/>
            <person name="Angiuoli S.V."/>
            <person name="Oggioni M."/>
            <person name="Dunning Hotopp J.C."/>
            <person name="Hu F.Z."/>
            <person name="Riley D.R."/>
            <person name="Covacci A."/>
            <person name="Mitchell T.J."/>
            <person name="Bentley S.D."/>
            <person name="Kilian M."/>
            <person name="Ehrlich G.D."/>
            <person name="Rappuoli R."/>
            <person name="Moxon E.R."/>
            <person name="Masignani V."/>
        </authorList>
    </citation>
    <scope>NUCLEOTIDE SEQUENCE [LARGE SCALE GENOMIC DNA]</scope>
    <source>
        <strain>70585</strain>
    </source>
</reference>
<organism>
    <name type="scientific">Streptococcus pneumoniae (strain 70585)</name>
    <dbReference type="NCBI Taxonomy" id="488221"/>
    <lineage>
        <taxon>Bacteria</taxon>
        <taxon>Bacillati</taxon>
        <taxon>Bacillota</taxon>
        <taxon>Bacilli</taxon>
        <taxon>Lactobacillales</taxon>
        <taxon>Streptococcaceae</taxon>
        <taxon>Streptococcus</taxon>
    </lineage>
</organism>
<evidence type="ECO:0000255" key="1">
    <source>
        <dbReference type="HAMAP-Rule" id="MF_00800"/>
    </source>
</evidence>
<gene>
    <name type="ordered locus">SP70585_0722</name>
</gene>
<protein>
    <recommendedName>
        <fullName evidence="1">UPF0340 protein SP70585_0722</fullName>
    </recommendedName>
</protein>
<accession>C1C625</accession>
<sequence>MNETQIQRETRQVVEDVLEKTNLKQGALFVLGLSSSEVLGGQIGKESSQEIGELIVETILGILSSRGIHLAVQGCEHVNRALVVERQVAEQFGLEIVSVHPTLHAGGSGQLAAFKFMQDPVEVEFIKAHAGLDIGDTAIGMHVKHVQVPIRPILREIGHAHVTALASRPKLIGGARAHYPQDAIRKS</sequence>
<comment type="similarity">
    <text evidence="1">Belongs to the UPF0340 family.</text>
</comment>
<dbReference type="EMBL" id="CP000918">
    <property type="protein sequence ID" value="ACO17208.1"/>
    <property type="molecule type" value="Genomic_DNA"/>
</dbReference>
<dbReference type="RefSeq" id="WP_001006376.1">
    <property type="nucleotide sequence ID" value="NC_012468.1"/>
</dbReference>
<dbReference type="SMR" id="C1C625"/>
<dbReference type="KEGG" id="snm:SP70585_0722"/>
<dbReference type="HOGENOM" id="CLU_106658_0_0_9"/>
<dbReference type="Proteomes" id="UP000002211">
    <property type="component" value="Chromosome"/>
</dbReference>
<dbReference type="Gene3D" id="3.40.50.10360">
    <property type="entry name" value="Hypothetical protein TT1679"/>
    <property type="match status" value="1"/>
</dbReference>
<dbReference type="HAMAP" id="MF_00800">
    <property type="entry name" value="UPF0340"/>
    <property type="match status" value="1"/>
</dbReference>
<dbReference type="InterPro" id="IPR028345">
    <property type="entry name" value="Antibiotic_NAT-like"/>
</dbReference>
<dbReference type="InterPro" id="IPR006340">
    <property type="entry name" value="DUF436"/>
</dbReference>
<dbReference type="NCBIfam" id="TIGR01440">
    <property type="entry name" value="TIGR01440 family protein"/>
    <property type="match status" value="1"/>
</dbReference>
<dbReference type="Pfam" id="PF04260">
    <property type="entry name" value="DUF436"/>
    <property type="match status" value="1"/>
</dbReference>
<dbReference type="PIRSF" id="PIRSF007510">
    <property type="entry name" value="UCP007510"/>
    <property type="match status" value="1"/>
</dbReference>
<dbReference type="SUPFAM" id="SSF110710">
    <property type="entry name" value="TTHA0583/YokD-like"/>
    <property type="match status" value="1"/>
</dbReference>
<name>Y722_STRP7</name>
<proteinExistence type="inferred from homology"/>
<feature type="chain" id="PRO_1000148527" description="UPF0340 protein SP70585_0722">
    <location>
        <begin position="1"/>
        <end position="187"/>
    </location>
</feature>